<comment type="function">
    <text evidence="1">Required for the proteolytic cleavage of the transcription factor RIM101 in response to alkaline ambient pH.</text>
</comment>
<comment type="subcellular location">
    <subcellularLocation>
        <location evidence="1">Cell membrane</location>
        <topology evidence="1">Multi-pass membrane protein</topology>
    </subcellularLocation>
</comment>
<comment type="similarity">
    <text evidence="4">Belongs to the palI/RIM9 family.</text>
</comment>
<evidence type="ECO:0000250" key="1"/>
<evidence type="ECO:0000255" key="2"/>
<evidence type="ECO:0000256" key="3">
    <source>
        <dbReference type="SAM" id="MobiDB-lite"/>
    </source>
</evidence>
<evidence type="ECO:0000305" key="4"/>
<name>PALI_PYRO7</name>
<organism>
    <name type="scientific">Pyricularia oryzae (strain 70-15 / ATCC MYA-4617 / FGSC 8958)</name>
    <name type="common">Rice blast fungus</name>
    <name type="synonym">Magnaporthe oryzae</name>
    <dbReference type="NCBI Taxonomy" id="242507"/>
    <lineage>
        <taxon>Eukaryota</taxon>
        <taxon>Fungi</taxon>
        <taxon>Dikarya</taxon>
        <taxon>Ascomycota</taxon>
        <taxon>Pezizomycotina</taxon>
        <taxon>Sordariomycetes</taxon>
        <taxon>Sordariomycetidae</taxon>
        <taxon>Magnaporthales</taxon>
        <taxon>Pyriculariaceae</taxon>
        <taxon>Pyricularia</taxon>
    </lineage>
</organism>
<proteinExistence type="inferred from homology"/>
<protein>
    <recommendedName>
        <fullName>pH-response regulator protein palI/RIM9</fullName>
    </recommendedName>
</protein>
<reference key="1">
    <citation type="journal article" date="2005" name="Nature">
        <title>The genome sequence of the rice blast fungus Magnaporthe grisea.</title>
        <authorList>
            <person name="Dean R.A."/>
            <person name="Talbot N.J."/>
            <person name="Ebbole D.J."/>
            <person name="Farman M.L."/>
            <person name="Mitchell T.K."/>
            <person name="Orbach M.J."/>
            <person name="Thon M.R."/>
            <person name="Kulkarni R."/>
            <person name="Xu J.-R."/>
            <person name="Pan H."/>
            <person name="Read N.D."/>
            <person name="Lee Y.-H."/>
            <person name="Carbone I."/>
            <person name="Brown D."/>
            <person name="Oh Y.Y."/>
            <person name="Donofrio N."/>
            <person name="Jeong J.S."/>
            <person name="Soanes D.M."/>
            <person name="Djonovic S."/>
            <person name="Kolomiets E."/>
            <person name="Rehmeyer C."/>
            <person name="Li W."/>
            <person name="Harding M."/>
            <person name="Kim S."/>
            <person name="Lebrun M.-H."/>
            <person name="Bohnert H."/>
            <person name="Coughlan S."/>
            <person name="Butler J."/>
            <person name="Calvo S.E."/>
            <person name="Ma L.-J."/>
            <person name="Nicol R."/>
            <person name="Purcell S."/>
            <person name="Nusbaum C."/>
            <person name="Galagan J.E."/>
            <person name="Birren B.W."/>
        </authorList>
    </citation>
    <scope>NUCLEOTIDE SEQUENCE [LARGE SCALE GENOMIC DNA]</scope>
    <source>
        <strain>70-15 / ATCC MYA-4617 / FGSC 8958</strain>
    </source>
</reference>
<feature type="chain" id="PRO_0000058213" description="pH-response regulator protein palI/RIM9">
    <location>
        <begin position="1"/>
        <end position="736"/>
    </location>
</feature>
<feature type="topological domain" description="Cytoplasmic" evidence="2">
    <location>
        <begin position="1"/>
        <end position="8"/>
    </location>
</feature>
<feature type="transmembrane region" description="Helical" evidence="2">
    <location>
        <begin position="9"/>
        <end position="29"/>
    </location>
</feature>
<feature type="topological domain" description="Extracellular" evidence="2">
    <location>
        <begin position="30"/>
        <end position="89"/>
    </location>
</feature>
<feature type="transmembrane region" description="Helical" evidence="2">
    <location>
        <begin position="90"/>
        <end position="110"/>
    </location>
</feature>
<feature type="topological domain" description="Cytoplasmic" evidence="2">
    <location>
        <begin position="111"/>
        <end position="122"/>
    </location>
</feature>
<feature type="transmembrane region" description="Helical" evidence="2">
    <location>
        <begin position="123"/>
        <end position="143"/>
    </location>
</feature>
<feature type="topological domain" description="Extracellular" evidence="2">
    <location>
        <begin position="144"/>
        <end position="151"/>
    </location>
</feature>
<feature type="transmembrane region" description="Helical" evidence="2">
    <location>
        <begin position="152"/>
        <end position="172"/>
    </location>
</feature>
<feature type="topological domain" description="Cytoplasmic" evidence="2">
    <location>
        <begin position="173"/>
        <end position="736"/>
    </location>
</feature>
<feature type="region of interest" description="Disordered" evidence="3">
    <location>
        <begin position="201"/>
        <end position="226"/>
    </location>
</feature>
<feature type="region of interest" description="Disordered" evidence="3">
    <location>
        <begin position="240"/>
        <end position="500"/>
    </location>
</feature>
<feature type="region of interest" description="Disordered" evidence="3">
    <location>
        <begin position="513"/>
        <end position="736"/>
    </location>
</feature>
<feature type="compositionally biased region" description="Polar residues" evidence="3">
    <location>
        <begin position="201"/>
        <end position="210"/>
    </location>
</feature>
<feature type="compositionally biased region" description="Basic and acidic residues" evidence="3">
    <location>
        <begin position="240"/>
        <end position="251"/>
    </location>
</feature>
<feature type="compositionally biased region" description="Polar residues" evidence="3">
    <location>
        <begin position="254"/>
        <end position="269"/>
    </location>
</feature>
<feature type="compositionally biased region" description="Gly residues" evidence="3">
    <location>
        <begin position="316"/>
        <end position="363"/>
    </location>
</feature>
<feature type="compositionally biased region" description="Pro residues" evidence="3">
    <location>
        <begin position="448"/>
        <end position="461"/>
    </location>
</feature>
<feature type="compositionally biased region" description="Polar residues" evidence="3">
    <location>
        <begin position="473"/>
        <end position="482"/>
    </location>
</feature>
<feature type="compositionally biased region" description="Polar residues" evidence="3">
    <location>
        <begin position="513"/>
        <end position="540"/>
    </location>
</feature>
<feature type="compositionally biased region" description="Polar residues" evidence="3">
    <location>
        <begin position="573"/>
        <end position="586"/>
    </location>
</feature>
<feature type="compositionally biased region" description="Polar residues" evidence="3">
    <location>
        <begin position="656"/>
        <end position="667"/>
    </location>
</feature>
<keyword id="KW-1003">Cell membrane</keyword>
<keyword id="KW-0472">Membrane</keyword>
<keyword id="KW-1185">Reference proteome</keyword>
<keyword id="KW-0812">Transmembrane</keyword>
<keyword id="KW-1133">Transmembrane helix</keyword>
<gene>
    <name type="primary">RIM9</name>
    <name type="ORF">MGCH7_ch7g355</name>
    <name type="ORF">MGG_02630</name>
</gene>
<accession>Q51MB1</accession>
<accession>A4RCC7</accession>
<accession>G4NJK0</accession>
<accession>Q2KGI0</accession>
<dbReference type="EMBL" id="CM000230">
    <property type="protein sequence ID" value="EAQ70948.1"/>
    <property type="molecule type" value="Genomic_DNA"/>
</dbReference>
<dbReference type="EMBL" id="CM001237">
    <property type="protein sequence ID" value="EHA46416.1"/>
    <property type="molecule type" value="Genomic_DNA"/>
</dbReference>
<dbReference type="RefSeq" id="XP_003721159.1">
    <property type="nucleotide sequence ID" value="XM_003721111.1"/>
</dbReference>
<dbReference type="STRING" id="242507.Q51MB1"/>
<dbReference type="EnsemblFungi" id="MGG_02630T0">
    <property type="protein sequence ID" value="MGG_02630T0"/>
    <property type="gene ID" value="MGG_02630"/>
</dbReference>
<dbReference type="GeneID" id="2682829"/>
<dbReference type="KEGG" id="mgr:MGG_02630"/>
<dbReference type="VEuPathDB" id="FungiDB:MGG_02630"/>
<dbReference type="eggNOG" id="ENOG502S1J0">
    <property type="taxonomic scope" value="Eukaryota"/>
</dbReference>
<dbReference type="HOGENOM" id="CLU_016694_1_0_1"/>
<dbReference type="InParanoid" id="Q51MB1"/>
<dbReference type="OMA" id="VFGYCKG"/>
<dbReference type="OrthoDB" id="2354757at2759"/>
<dbReference type="Proteomes" id="UP000009058">
    <property type="component" value="Chromosome 7"/>
</dbReference>
<dbReference type="GO" id="GO:0032153">
    <property type="term" value="C:cell division site"/>
    <property type="evidence" value="ECO:0007669"/>
    <property type="project" value="TreeGrafter"/>
</dbReference>
<dbReference type="GO" id="GO:0035838">
    <property type="term" value="C:growing cell tip"/>
    <property type="evidence" value="ECO:0007669"/>
    <property type="project" value="TreeGrafter"/>
</dbReference>
<dbReference type="GO" id="GO:0005886">
    <property type="term" value="C:plasma membrane"/>
    <property type="evidence" value="ECO:0007669"/>
    <property type="project" value="UniProtKB-SubCell"/>
</dbReference>
<dbReference type="InterPro" id="IPR051380">
    <property type="entry name" value="pH-response_reg_palI/RIM9"/>
</dbReference>
<dbReference type="InterPro" id="IPR009571">
    <property type="entry name" value="SUR7/Rim9-like_fungi"/>
</dbReference>
<dbReference type="PANTHER" id="PTHR28013">
    <property type="entry name" value="PROTEIN DCV1-RELATED"/>
    <property type="match status" value="1"/>
</dbReference>
<dbReference type="PANTHER" id="PTHR28013:SF3">
    <property type="entry name" value="PROTEIN DCV1-RELATED"/>
    <property type="match status" value="1"/>
</dbReference>
<dbReference type="Pfam" id="PF06687">
    <property type="entry name" value="SUR7"/>
    <property type="match status" value="1"/>
</dbReference>
<sequence>MLRPATPLAVLLAAAFGLLLISVLSTPIIKAIPLGEYVGVTFGVFGYCINNNARCSPIEIGYDEGLAAALADKNANFDLPSQARRTLSTILIIHPVAALVTLIMFAMSIAAHFHSPSHSARYLLIVFIVGLLNFVICLLAFLVDVLLFVPHMAWGSYLVLAATILVALSGLVACAMRRTLVSRKARKKRIEENAEMSGENFYNRQAQQVTPPAENKPTVPVVSGANGAVGDKLPSFATYEKRDDLSSEDRVPLTANSPANRSPNAQYNDPNRPDGQFNQPRRAPSGRDQYGNPMEGPTDSYGVQRAPSAERMNPGARGGYRGRGYGPPGRGGYGYGPPPGSRGGYGPPGRGGYGPGPNGRGGYGPPPRGGYGPPMRGRAPPPGYQYDRRGSPAEAYGPPPGQGPYGQRQQSPGPPSAPGYGMNGSTPTVSSAAYGHQHTPSDDLPRAESPPPLPGTEPMPPVGQAVAMDAKTGSPQVPQNGFTAMPPPNRFGGGQQFRDSDADIQGMVGLQQGITPAGQQPPSQRHQTLMSEPSHYSQEGPQYVPARQNWNDQRSKTPGAESVIHPSMMPQPLNASRTDLSISRNSPGPGGAPARSRTSEYYEDVAPRFATPDPSLRGTPVPGQAGGRIPPPINLPAGGPDFDEMPDGSRSPAASERSTFTSISQRGINPRWNPPPPSMMPGYGPAPQRRPNRNDMLLNSNPDFELPTNRGGRGGSPPRAPGTSMIPGSAYPNGRL</sequence>